<organism>
    <name type="scientific">Equine herpesvirus 1 (strain Ab4p)</name>
    <name type="common">EHV-1</name>
    <name type="synonym">Equine abortion virus</name>
    <dbReference type="NCBI Taxonomy" id="31520"/>
    <lineage>
        <taxon>Viruses</taxon>
        <taxon>Duplodnaviria</taxon>
        <taxon>Heunggongvirae</taxon>
        <taxon>Peploviricota</taxon>
        <taxon>Herviviricetes</taxon>
        <taxon>Herpesvirales</taxon>
        <taxon>Orthoherpesviridae</taxon>
        <taxon>Alphaherpesvirinae</taxon>
        <taxon>Varicellovirus</taxon>
        <taxon>Varicellovirus equidalpha1</taxon>
        <taxon>Equid alphaherpesvirus 1</taxon>
    </lineage>
</organism>
<reference key="1">
    <citation type="journal article" date="1992" name="Virology">
        <title>The DNA sequence of equine herpesvirus-1.</title>
        <authorList>
            <person name="Telford E.A.R."/>
            <person name="Watson M.S."/>
            <person name="McBride K."/>
            <person name="Davison A.J."/>
        </authorList>
    </citation>
    <scope>NUCLEOTIDE SEQUENCE [LARGE SCALE GENOMIC DNA]</scope>
</reference>
<name>VG75_EHV1B</name>
<dbReference type="EMBL" id="AY665713">
    <property type="protein sequence ID" value="AAT67332.1"/>
    <property type="molecule type" value="Genomic_DNA"/>
</dbReference>
<dbReference type="PIR" id="C36803">
    <property type="entry name" value="C36803"/>
</dbReference>
<dbReference type="SMR" id="P28985"/>
<dbReference type="KEGG" id="vg:2948577"/>
<dbReference type="Proteomes" id="UP000001189">
    <property type="component" value="Segment"/>
</dbReference>
<keyword id="KW-1185">Reference proteome</keyword>
<evidence type="ECO:0000256" key="1">
    <source>
        <dbReference type="SAM" id="MobiDB-lite"/>
    </source>
</evidence>
<proteinExistence type="predicted"/>
<feature type="chain" id="PRO_0000116172" description="Uncharacterized gene 75 protein">
    <location>
        <begin position="1"/>
        <end position="130"/>
    </location>
</feature>
<feature type="region of interest" description="Disordered" evidence="1">
    <location>
        <begin position="1"/>
        <end position="100"/>
    </location>
</feature>
<feature type="compositionally biased region" description="Basic and acidic residues" evidence="1">
    <location>
        <begin position="57"/>
        <end position="75"/>
    </location>
</feature>
<feature type="compositionally biased region" description="Basic and acidic residues" evidence="1">
    <location>
        <begin position="91"/>
        <end position="100"/>
    </location>
</feature>
<protein>
    <recommendedName>
        <fullName>Uncharacterized gene 75 protein</fullName>
    </recommendedName>
</protein>
<accession>P28985</accession>
<accession>Q6S6V6</accession>
<organismHost>
    <name type="scientific">Equus caballus</name>
    <name type="common">Horse</name>
    <dbReference type="NCBI Taxonomy" id="9796"/>
</organismHost>
<gene>
    <name type="ordered locus">75</name>
</gene>
<sequence length="130" mass="14855">MSSNSDNTECFGGVNYAEGMRKRKRNPVRNSTFQEYLDARNARYPRSGSTSDSDEDYTTRSKYESDVSEFKKMMDLETLPPPKAEPQAQKAEPDAAKEEPVSTTSYILNEWVAPMIGHFLAMCMYELLFK</sequence>